<dbReference type="EC" id="6.5.1.2" evidence="1"/>
<dbReference type="EMBL" id="CP000847">
    <property type="protein sequence ID" value="ABV75354.1"/>
    <property type="molecule type" value="Genomic_DNA"/>
</dbReference>
<dbReference type="RefSeq" id="WP_012149984.1">
    <property type="nucleotide sequence ID" value="NC_009881.1"/>
</dbReference>
<dbReference type="SMR" id="A8GPM9"/>
<dbReference type="STRING" id="293614.A1C_05595"/>
<dbReference type="KEGG" id="rak:A1C_05595"/>
<dbReference type="eggNOG" id="COG0272">
    <property type="taxonomic scope" value="Bacteria"/>
</dbReference>
<dbReference type="HOGENOM" id="CLU_007764_2_1_5"/>
<dbReference type="Proteomes" id="UP000006830">
    <property type="component" value="Chromosome"/>
</dbReference>
<dbReference type="GO" id="GO:0005829">
    <property type="term" value="C:cytosol"/>
    <property type="evidence" value="ECO:0007669"/>
    <property type="project" value="TreeGrafter"/>
</dbReference>
<dbReference type="GO" id="GO:0003911">
    <property type="term" value="F:DNA ligase (NAD+) activity"/>
    <property type="evidence" value="ECO:0007669"/>
    <property type="project" value="UniProtKB-UniRule"/>
</dbReference>
<dbReference type="GO" id="GO:0046872">
    <property type="term" value="F:metal ion binding"/>
    <property type="evidence" value="ECO:0007669"/>
    <property type="project" value="UniProtKB-KW"/>
</dbReference>
<dbReference type="GO" id="GO:0006281">
    <property type="term" value="P:DNA repair"/>
    <property type="evidence" value="ECO:0007669"/>
    <property type="project" value="UniProtKB-KW"/>
</dbReference>
<dbReference type="GO" id="GO:0006260">
    <property type="term" value="P:DNA replication"/>
    <property type="evidence" value="ECO:0007669"/>
    <property type="project" value="UniProtKB-KW"/>
</dbReference>
<dbReference type="CDD" id="cd17748">
    <property type="entry name" value="BRCT_DNA_ligase_like"/>
    <property type="match status" value="1"/>
</dbReference>
<dbReference type="CDD" id="cd00114">
    <property type="entry name" value="LIGANc"/>
    <property type="match status" value="1"/>
</dbReference>
<dbReference type="FunFam" id="1.10.150.20:FF:000007">
    <property type="entry name" value="DNA ligase"/>
    <property type="match status" value="1"/>
</dbReference>
<dbReference type="FunFam" id="2.40.50.140:FF:000012">
    <property type="entry name" value="DNA ligase"/>
    <property type="match status" value="1"/>
</dbReference>
<dbReference type="FunFam" id="3.30.470.30:FF:000001">
    <property type="entry name" value="DNA ligase"/>
    <property type="match status" value="1"/>
</dbReference>
<dbReference type="Gene3D" id="6.20.10.30">
    <property type="match status" value="1"/>
</dbReference>
<dbReference type="Gene3D" id="1.10.150.20">
    <property type="entry name" value="5' to 3' exonuclease, C-terminal subdomain"/>
    <property type="match status" value="2"/>
</dbReference>
<dbReference type="Gene3D" id="3.40.50.10190">
    <property type="entry name" value="BRCT domain"/>
    <property type="match status" value="1"/>
</dbReference>
<dbReference type="Gene3D" id="3.30.470.30">
    <property type="entry name" value="DNA ligase/mRNA capping enzyme"/>
    <property type="match status" value="1"/>
</dbReference>
<dbReference type="Gene3D" id="1.10.287.610">
    <property type="entry name" value="Helix hairpin bin"/>
    <property type="match status" value="1"/>
</dbReference>
<dbReference type="Gene3D" id="2.40.50.140">
    <property type="entry name" value="Nucleic acid-binding proteins"/>
    <property type="match status" value="1"/>
</dbReference>
<dbReference type="HAMAP" id="MF_01588">
    <property type="entry name" value="DNA_ligase_A"/>
    <property type="match status" value="1"/>
</dbReference>
<dbReference type="InterPro" id="IPR001357">
    <property type="entry name" value="BRCT_dom"/>
</dbReference>
<dbReference type="InterPro" id="IPR036420">
    <property type="entry name" value="BRCT_dom_sf"/>
</dbReference>
<dbReference type="InterPro" id="IPR041663">
    <property type="entry name" value="DisA/LigA_HHH"/>
</dbReference>
<dbReference type="InterPro" id="IPR001679">
    <property type="entry name" value="DNA_ligase"/>
</dbReference>
<dbReference type="InterPro" id="IPR018239">
    <property type="entry name" value="DNA_ligase_AS"/>
</dbReference>
<dbReference type="InterPro" id="IPR033136">
    <property type="entry name" value="DNA_ligase_CS"/>
</dbReference>
<dbReference type="InterPro" id="IPR013839">
    <property type="entry name" value="DNAligase_adenylation"/>
</dbReference>
<dbReference type="InterPro" id="IPR013840">
    <property type="entry name" value="DNAligase_N"/>
</dbReference>
<dbReference type="InterPro" id="IPR012340">
    <property type="entry name" value="NA-bd_OB-fold"/>
</dbReference>
<dbReference type="InterPro" id="IPR004150">
    <property type="entry name" value="NAD_DNA_ligase_OB"/>
</dbReference>
<dbReference type="InterPro" id="IPR010994">
    <property type="entry name" value="RuvA_2-like"/>
</dbReference>
<dbReference type="InterPro" id="IPR004149">
    <property type="entry name" value="Znf_DNAligase_C4"/>
</dbReference>
<dbReference type="NCBIfam" id="TIGR00575">
    <property type="entry name" value="dnlj"/>
    <property type="match status" value="1"/>
</dbReference>
<dbReference type="NCBIfam" id="NF005932">
    <property type="entry name" value="PRK07956.1"/>
    <property type="match status" value="1"/>
</dbReference>
<dbReference type="PANTHER" id="PTHR23389">
    <property type="entry name" value="CHROMOSOME TRANSMISSION FIDELITY FACTOR 18"/>
    <property type="match status" value="1"/>
</dbReference>
<dbReference type="PANTHER" id="PTHR23389:SF9">
    <property type="entry name" value="DNA LIGASE"/>
    <property type="match status" value="1"/>
</dbReference>
<dbReference type="Pfam" id="PF00533">
    <property type="entry name" value="BRCT"/>
    <property type="match status" value="1"/>
</dbReference>
<dbReference type="Pfam" id="PF01653">
    <property type="entry name" value="DNA_ligase_aden"/>
    <property type="match status" value="1"/>
</dbReference>
<dbReference type="Pfam" id="PF03120">
    <property type="entry name" value="DNA_ligase_OB"/>
    <property type="match status" value="1"/>
</dbReference>
<dbReference type="Pfam" id="PF03119">
    <property type="entry name" value="DNA_ligase_ZBD"/>
    <property type="match status" value="1"/>
</dbReference>
<dbReference type="Pfam" id="PF12826">
    <property type="entry name" value="HHH_2"/>
    <property type="match status" value="1"/>
</dbReference>
<dbReference type="PIRSF" id="PIRSF001604">
    <property type="entry name" value="LigA"/>
    <property type="match status" value="1"/>
</dbReference>
<dbReference type="SMART" id="SM00292">
    <property type="entry name" value="BRCT"/>
    <property type="match status" value="1"/>
</dbReference>
<dbReference type="SMART" id="SM00532">
    <property type="entry name" value="LIGANc"/>
    <property type="match status" value="1"/>
</dbReference>
<dbReference type="SUPFAM" id="SSF52113">
    <property type="entry name" value="BRCT domain"/>
    <property type="match status" value="1"/>
</dbReference>
<dbReference type="SUPFAM" id="SSF56091">
    <property type="entry name" value="DNA ligase/mRNA capping enzyme, catalytic domain"/>
    <property type="match status" value="1"/>
</dbReference>
<dbReference type="SUPFAM" id="SSF50249">
    <property type="entry name" value="Nucleic acid-binding proteins"/>
    <property type="match status" value="1"/>
</dbReference>
<dbReference type="SUPFAM" id="SSF47781">
    <property type="entry name" value="RuvA domain 2-like"/>
    <property type="match status" value="1"/>
</dbReference>
<dbReference type="PROSITE" id="PS50172">
    <property type="entry name" value="BRCT"/>
    <property type="match status" value="1"/>
</dbReference>
<dbReference type="PROSITE" id="PS01055">
    <property type="entry name" value="DNA_LIGASE_N1"/>
    <property type="match status" value="1"/>
</dbReference>
<dbReference type="PROSITE" id="PS01056">
    <property type="entry name" value="DNA_LIGASE_N2"/>
    <property type="match status" value="1"/>
</dbReference>
<gene>
    <name evidence="1" type="primary">ligA</name>
    <name type="ordered locus">A1C_05595</name>
</gene>
<reference key="1">
    <citation type="submission" date="2007-09" db="EMBL/GenBank/DDBJ databases">
        <title>Complete genome sequence of Rickettsia akari.</title>
        <authorList>
            <person name="Madan A."/>
            <person name="Fahey J."/>
            <person name="Helton E."/>
            <person name="Ketteman M."/>
            <person name="Madan A."/>
            <person name="Rodrigues S."/>
            <person name="Sanchez A."/>
            <person name="Whiting M."/>
            <person name="Dasch G."/>
            <person name="Eremeeva M."/>
        </authorList>
    </citation>
    <scope>NUCLEOTIDE SEQUENCE [LARGE SCALE GENOMIC DNA]</scope>
    <source>
        <strain>Hartford</strain>
    </source>
</reference>
<comment type="function">
    <text evidence="1">DNA ligase that catalyzes the formation of phosphodiester linkages between 5'-phosphoryl and 3'-hydroxyl groups in double-stranded DNA using NAD as a coenzyme and as the energy source for the reaction. It is essential for DNA replication and repair of damaged DNA.</text>
</comment>
<comment type="catalytic activity">
    <reaction evidence="1">
        <text>NAD(+) + (deoxyribonucleotide)n-3'-hydroxyl + 5'-phospho-(deoxyribonucleotide)m = (deoxyribonucleotide)n+m + AMP + beta-nicotinamide D-nucleotide.</text>
        <dbReference type="EC" id="6.5.1.2"/>
    </reaction>
</comment>
<comment type="cofactor">
    <cofactor evidence="1">
        <name>Mg(2+)</name>
        <dbReference type="ChEBI" id="CHEBI:18420"/>
    </cofactor>
    <cofactor evidence="1">
        <name>Mn(2+)</name>
        <dbReference type="ChEBI" id="CHEBI:29035"/>
    </cofactor>
</comment>
<comment type="similarity">
    <text evidence="1">Belongs to the NAD-dependent DNA ligase family. LigA subfamily.</text>
</comment>
<feature type="chain" id="PRO_0000313406" description="DNA ligase">
    <location>
        <begin position="1"/>
        <end position="689"/>
    </location>
</feature>
<feature type="domain" description="BRCT" evidence="1">
    <location>
        <begin position="610"/>
        <end position="689"/>
    </location>
</feature>
<feature type="active site" description="N6-AMP-lysine intermediate" evidence="1">
    <location>
        <position position="123"/>
    </location>
</feature>
<feature type="binding site" evidence="1">
    <location>
        <begin position="40"/>
        <end position="44"/>
    </location>
    <ligand>
        <name>NAD(+)</name>
        <dbReference type="ChEBI" id="CHEBI:57540"/>
    </ligand>
</feature>
<feature type="binding site" evidence="1">
    <location>
        <begin position="89"/>
        <end position="90"/>
    </location>
    <ligand>
        <name>NAD(+)</name>
        <dbReference type="ChEBI" id="CHEBI:57540"/>
    </ligand>
</feature>
<feature type="binding site" evidence="1">
    <location>
        <position position="121"/>
    </location>
    <ligand>
        <name>NAD(+)</name>
        <dbReference type="ChEBI" id="CHEBI:57540"/>
    </ligand>
</feature>
<feature type="binding site" evidence="1">
    <location>
        <position position="144"/>
    </location>
    <ligand>
        <name>NAD(+)</name>
        <dbReference type="ChEBI" id="CHEBI:57540"/>
    </ligand>
</feature>
<feature type="binding site" evidence="1">
    <location>
        <position position="179"/>
    </location>
    <ligand>
        <name>NAD(+)</name>
        <dbReference type="ChEBI" id="CHEBI:57540"/>
    </ligand>
</feature>
<feature type="binding site" evidence="1">
    <location>
        <position position="295"/>
    </location>
    <ligand>
        <name>NAD(+)</name>
        <dbReference type="ChEBI" id="CHEBI:57540"/>
    </ligand>
</feature>
<feature type="binding site" evidence="1">
    <location>
        <position position="319"/>
    </location>
    <ligand>
        <name>NAD(+)</name>
        <dbReference type="ChEBI" id="CHEBI:57540"/>
    </ligand>
</feature>
<feature type="binding site" evidence="1">
    <location>
        <position position="413"/>
    </location>
    <ligand>
        <name>Zn(2+)</name>
        <dbReference type="ChEBI" id="CHEBI:29105"/>
    </ligand>
</feature>
<feature type="binding site" evidence="1">
    <location>
        <position position="416"/>
    </location>
    <ligand>
        <name>Zn(2+)</name>
        <dbReference type="ChEBI" id="CHEBI:29105"/>
    </ligand>
</feature>
<feature type="binding site" evidence="1">
    <location>
        <position position="431"/>
    </location>
    <ligand>
        <name>Zn(2+)</name>
        <dbReference type="ChEBI" id="CHEBI:29105"/>
    </ligand>
</feature>
<feature type="binding site" evidence="1">
    <location>
        <position position="437"/>
    </location>
    <ligand>
        <name>Zn(2+)</name>
        <dbReference type="ChEBI" id="CHEBI:29105"/>
    </ligand>
</feature>
<organism>
    <name type="scientific">Rickettsia akari (strain Hartford)</name>
    <dbReference type="NCBI Taxonomy" id="293614"/>
    <lineage>
        <taxon>Bacteria</taxon>
        <taxon>Pseudomonadati</taxon>
        <taxon>Pseudomonadota</taxon>
        <taxon>Alphaproteobacteria</taxon>
        <taxon>Rickettsiales</taxon>
        <taxon>Rickettsiaceae</taxon>
        <taxon>Rickettsieae</taxon>
        <taxon>Rickettsia</taxon>
        <taxon>spotted fever group</taxon>
    </lineage>
</organism>
<accession>A8GPM9</accession>
<sequence length="689" mass="77421">MQNIDFISEAEAKKLLEELSCKIAAYNHAYYIEDNPLVSDAEYDQLVNINLKLEQQFPHLVLENSPSKEVGAKIANKFVKVTHQVPMLSLSNAFDEQDVRDFVDRIKNFLRLDEFAPIFCEPKIDGLSFSAIYKNGLLITGATRGDGYVGEDITANIKTIKNFPHKIDNAPECLEVRGEIYIEKQDFLNLNEEQEEQGRDQFANPRNAAAGSLRQLDASITAKRPLKYFVYSGGVTEQNLASSQDQLLTKLKKFGFSVNEISKLTKSEEEIFAFYEYLKTNRENLPYEIDGVVYKLNDFELQNRMGFIARSPRFATAHKFPAIIGQTKLLSITVQVGRTGTLTPVAELEPIEIGGVTVSRATLHNFQEIVRKDVQIKDYVFLQRAGDVIPKITGADIEKRPNDTIAFEAPLFCPSCNSKLYYVPEDIIIRCDNGLNCPAQHYERIRHFVSKNAMDIAGLGRKQVEFLIAKGLISNPLDIFFLKKNNEASLIKLENMDGWGQKSVEKLLKNIEKSKNVSLPRFIYALGIRHIGEQNAKLLAREFGSYNNFIAQMELLSKNDSDIYQKLNNLEGIGDKILIDIIAFLDVKENIQLIKKLGEILNIEDYKETRAQSSLTGKIVVFTGSLPTISRAEVKATAEKLGAKVAASVSSNTDLVVAGLDAGSKLQKAKELNIKIIDEEEWLTLIKNA</sequence>
<name>DNLJ_RICAH</name>
<keyword id="KW-0227">DNA damage</keyword>
<keyword id="KW-0234">DNA repair</keyword>
<keyword id="KW-0235">DNA replication</keyword>
<keyword id="KW-0436">Ligase</keyword>
<keyword id="KW-0460">Magnesium</keyword>
<keyword id="KW-0464">Manganese</keyword>
<keyword id="KW-0479">Metal-binding</keyword>
<keyword id="KW-0520">NAD</keyword>
<keyword id="KW-0862">Zinc</keyword>
<evidence type="ECO:0000255" key="1">
    <source>
        <dbReference type="HAMAP-Rule" id="MF_01588"/>
    </source>
</evidence>
<proteinExistence type="inferred from homology"/>
<protein>
    <recommendedName>
        <fullName evidence="1">DNA ligase</fullName>
        <ecNumber evidence="1">6.5.1.2</ecNumber>
    </recommendedName>
    <alternativeName>
        <fullName evidence="1">Polydeoxyribonucleotide synthase [NAD(+)]</fullName>
    </alternativeName>
</protein>